<feature type="chain" id="PRO_0000455968" description="Woronin body membrane protein wscA">
    <location>
        <begin position="1"/>
        <end position="228"/>
    </location>
</feature>
<feature type="transmembrane region" description="Helical" evidence="2">
    <location>
        <begin position="89"/>
        <end position="109"/>
    </location>
</feature>
<feature type="transmembrane region" description="Helical" evidence="2">
    <location>
        <begin position="130"/>
        <end position="150"/>
    </location>
</feature>
<feature type="transmembrane region" description="Helical" evidence="2">
    <location>
        <begin position="162"/>
        <end position="182"/>
    </location>
</feature>
<feature type="transmembrane region" description="Helical" evidence="2">
    <location>
        <begin position="185"/>
        <end position="205"/>
    </location>
</feature>
<accession>Q4WZG1</accession>
<gene>
    <name evidence="4" type="primary">wscA</name>
    <name type="ORF">AFUA_2G17080</name>
</gene>
<reference key="1">
    <citation type="journal article" date="2005" name="Nature">
        <title>Genomic sequence of the pathogenic and allergenic filamentous fungus Aspergillus fumigatus.</title>
        <authorList>
            <person name="Nierman W.C."/>
            <person name="Pain A."/>
            <person name="Anderson M.J."/>
            <person name="Wortman J.R."/>
            <person name="Kim H.S."/>
            <person name="Arroyo J."/>
            <person name="Berriman M."/>
            <person name="Abe K."/>
            <person name="Archer D.B."/>
            <person name="Bermejo C."/>
            <person name="Bennett J.W."/>
            <person name="Bowyer P."/>
            <person name="Chen D."/>
            <person name="Collins M."/>
            <person name="Coulsen R."/>
            <person name="Davies R."/>
            <person name="Dyer P.S."/>
            <person name="Farman M.L."/>
            <person name="Fedorova N."/>
            <person name="Fedorova N.D."/>
            <person name="Feldblyum T.V."/>
            <person name="Fischer R."/>
            <person name="Fosker N."/>
            <person name="Fraser A."/>
            <person name="Garcia J.L."/>
            <person name="Garcia M.J."/>
            <person name="Goble A."/>
            <person name="Goldman G.H."/>
            <person name="Gomi K."/>
            <person name="Griffith-Jones S."/>
            <person name="Gwilliam R."/>
            <person name="Haas B.J."/>
            <person name="Haas H."/>
            <person name="Harris D.E."/>
            <person name="Horiuchi H."/>
            <person name="Huang J."/>
            <person name="Humphray S."/>
            <person name="Jimenez J."/>
            <person name="Keller N."/>
            <person name="Khouri H."/>
            <person name="Kitamoto K."/>
            <person name="Kobayashi T."/>
            <person name="Konzack S."/>
            <person name="Kulkarni R."/>
            <person name="Kumagai T."/>
            <person name="Lafton A."/>
            <person name="Latge J.-P."/>
            <person name="Li W."/>
            <person name="Lord A."/>
            <person name="Lu C."/>
            <person name="Majoros W.H."/>
            <person name="May G.S."/>
            <person name="Miller B.L."/>
            <person name="Mohamoud Y."/>
            <person name="Molina M."/>
            <person name="Monod M."/>
            <person name="Mouyna I."/>
            <person name="Mulligan S."/>
            <person name="Murphy L.D."/>
            <person name="O'Neil S."/>
            <person name="Paulsen I."/>
            <person name="Penalva M.A."/>
            <person name="Pertea M."/>
            <person name="Price C."/>
            <person name="Pritchard B.L."/>
            <person name="Quail M.A."/>
            <person name="Rabbinowitsch E."/>
            <person name="Rawlins N."/>
            <person name="Rajandream M.A."/>
            <person name="Reichard U."/>
            <person name="Renauld H."/>
            <person name="Robson G.D."/>
            <person name="Rodriguez de Cordoba S."/>
            <person name="Rodriguez-Pena J.M."/>
            <person name="Ronning C.M."/>
            <person name="Rutter S."/>
            <person name="Salzberg S.L."/>
            <person name="Sanchez M."/>
            <person name="Sanchez-Ferrero J.C."/>
            <person name="Saunders D."/>
            <person name="Seeger K."/>
            <person name="Squares R."/>
            <person name="Squares S."/>
            <person name="Takeuchi M."/>
            <person name="Tekaia F."/>
            <person name="Turner G."/>
            <person name="Vazquez de Aldana C.R."/>
            <person name="Weidman J."/>
            <person name="White O."/>
            <person name="Woodward J.R."/>
            <person name="Yu J.-H."/>
            <person name="Fraser C.M."/>
            <person name="Galagan J.E."/>
            <person name="Asai K."/>
            <person name="Machida M."/>
            <person name="Hall N."/>
            <person name="Barrell B.G."/>
            <person name="Denning D.W."/>
        </authorList>
    </citation>
    <scope>NUCLEOTIDE SEQUENCE [LARGE SCALE GENOMIC DNA]</scope>
    <source>
        <strain>ATCC MYA-4609 / CBS 101355 / FGSC A1100 / Af293</strain>
    </source>
</reference>
<reference key="2">
    <citation type="journal article" date="2013" name="Mol. Microbiol.">
        <title>Woronin bodies, their impact on stress resistance and virulence of the pathogenic mould Aspergillus fumigatus and their anchoring at the septal pore of filamentous Ascomycota.</title>
        <authorList>
            <person name="Beck J."/>
            <person name="Echtenacher B."/>
            <person name="Ebel F."/>
        </authorList>
    </citation>
    <scope>FUNCTION</scope>
</reference>
<organism>
    <name type="scientific">Aspergillus fumigatus (strain ATCC MYA-4609 / CBS 101355 / FGSC A1100 / Af293)</name>
    <name type="common">Neosartorya fumigata</name>
    <dbReference type="NCBI Taxonomy" id="330879"/>
    <lineage>
        <taxon>Eukaryota</taxon>
        <taxon>Fungi</taxon>
        <taxon>Dikarya</taxon>
        <taxon>Ascomycota</taxon>
        <taxon>Pezizomycotina</taxon>
        <taxon>Eurotiomycetes</taxon>
        <taxon>Eurotiomycetidae</taxon>
        <taxon>Eurotiales</taxon>
        <taxon>Aspergillaceae</taxon>
        <taxon>Aspergillus</taxon>
        <taxon>Aspergillus subgen. Fumigati</taxon>
    </lineage>
</organism>
<protein>
    <recommendedName>
        <fullName evidence="4">Woronin body membrane protein wscA</fullName>
    </recommendedName>
</protein>
<evidence type="ECO:0000250" key="1">
    <source>
        <dbReference type="UniProtKB" id="U9W802"/>
    </source>
</evidence>
<evidence type="ECO:0000255" key="2"/>
<evidence type="ECO:0000269" key="3">
    <source>
    </source>
</evidence>
<evidence type="ECO:0000303" key="4">
    <source>
    </source>
</evidence>
<evidence type="ECO:0000305" key="5"/>
<comment type="function">
    <text evidence="1 3">Woronin sorting complex protein involved in both Woronin bodies (WB) formation and inherence (PubMed:23869404). Localizes to large peroxisome membranes where it self-assembles into detergent-resistant oligomers that envelop hex-1 assemblies, producing asymmetrical nascent WBs (By similarity). These structures are then delivered to the cell cortex, which permits partitioning of the nascent WB and WB inheritance (By similarity).</text>
</comment>
<comment type="subunit">
    <text evidence="1">Self-assembles into detergent-resistant oligomers and forms a complex with hexA assemblies.</text>
</comment>
<comment type="subcellular location">
    <subcellularLocation>
        <location evidence="1">Peroxisome membrane</location>
        <topology evidence="2">Multi-pass membrane protein</topology>
    </subcellularLocation>
    <subcellularLocation>
        <location evidence="1">Cell septum</location>
    </subcellularLocation>
    <text evidence="1">Localizes to nascent and mature Woronin bodies, fungal-specific organelles that plug the septal pore in case of physical damage.</text>
</comment>
<comment type="similarity">
    <text evidence="5">Belongs to the peroxisomal membrane protein PXMP2/4 family.</text>
</comment>
<proteinExistence type="inferred from homology"/>
<keyword id="KW-0472">Membrane</keyword>
<keyword id="KW-0576">Peroxisome</keyword>
<keyword id="KW-1185">Reference proteome</keyword>
<keyword id="KW-0812">Transmembrane</keyword>
<keyword id="KW-1133">Transmembrane helix</keyword>
<name>WSCA_ASPFU</name>
<sequence>MSVKFQEEATRSIRADTKELAHKVGERLTGGNAQTGYLALYLRQLQSNPLRTKMLTSGLLSGLQEVLASWIANDVSKHGHYFSARVPKMTLYGMFISAPLGHLLVGILQKVFAGRTSLKAKILQILASNLIVSPIQNAVYLMSMAIIAGARTLHQVRATVKAGFMPVMKVSWITSPLALAFAQKFLPEHTWVPFFNIIGFFIGTYVNTHTKKKRLEALRKVQSTSRTK</sequence>
<dbReference type="EMBL" id="AAHF01000001">
    <property type="protein sequence ID" value="EAL94004.1"/>
    <property type="molecule type" value="Genomic_DNA"/>
</dbReference>
<dbReference type="RefSeq" id="XP_756042.1">
    <property type="nucleotide sequence ID" value="XM_750949.1"/>
</dbReference>
<dbReference type="STRING" id="330879.Q4WZG1"/>
<dbReference type="EnsemblFungi" id="EAL94004">
    <property type="protein sequence ID" value="EAL94004"/>
    <property type="gene ID" value="AFUA_2G17080"/>
</dbReference>
<dbReference type="GeneID" id="3513521"/>
<dbReference type="KEGG" id="afm:AFUA_2G17080"/>
<dbReference type="eggNOG" id="KOG1944">
    <property type="taxonomic scope" value="Eukaryota"/>
</dbReference>
<dbReference type="HOGENOM" id="CLU_066033_1_0_1"/>
<dbReference type="InParanoid" id="Q4WZG1"/>
<dbReference type="OMA" id="KMAIYGA"/>
<dbReference type="OrthoDB" id="860at2759"/>
<dbReference type="Proteomes" id="UP000002530">
    <property type="component" value="Chromosome 2"/>
</dbReference>
<dbReference type="GO" id="GO:0030428">
    <property type="term" value="C:cell septum"/>
    <property type="evidence" value="ECO:0007669"/>
    <property type="project" value="UniProtKB-SubCell"/>
</dbReference>
<dbReference type="GO" id="GO:0005737">
    <property type="term" value="C:cytoplasm"/>
    <property type="evidence" value="ECO:0000318"/>
    <property type="project" value="GO_Central"/>
</dbReference>
<dbReference type="GO" id="GO:0005778">
    <property type="term" value="C:peroxisomal membrane"/>
    <property type="evidence" value="ECO:0000318"/>
    <property type="project" value="GO_Central"/>
</dbReference>
<dbReference type="GO" id="GO:0140266">
    <property type="term" value="C:Woronin body"/>
    <property type="evidence" value="ECO:0000250"/>
    <property type="project" value="GO_Central"/>
</dbReference>
<dbReference type="InterPro" id="IPR007248">
    <property type="entry name" value="Mpv17_PMP22"/>
</dbReference>
<dbReference type="PANTHER" id="PTHR11266:SF93">
    <property type="entry name" value="INTEGRAL MEMBRANE PROTEIN 25D9-6"/>
    <property type="match status" value="1"/>
</dbReference>
<dbReference type="PANTHER" id="PTHR11266">
    <property type="entry name" value="PEROXISOMAL MEMBRANE PROTEIN 2, PXMP2 MPV17"/>
    <property type="match status" value="1"/>
</dbReference>
<dbReference type="Pfam" id="PF04117">
    <property type="entry name" value="Mpv17_PMP22"/>
    <property type="match status" value="1"/>
</dbReference>